<evidence type="ECO:0000250" key="1"/>
<evidence type="ECO:0000255" key="2"/>
<evidence type="ECO:0000255" key="3">
    <source>
        <dbReference type="PROSITE-ProRule" id="PRU00040"/>
    </source>
</evidence>
<evidence type="ECO:0000256" key="4">
    <source>
        <dbReference type="SAM" id="MobiDB-lite"/>
    </source>
</evidence>
<evidence type="ECO:0000269" key="5">
    <source>
    </source>
</evidence>
<evidence type="ECO:0000269" key="6">
    <source>
    </source>
</evidence>
<evidence type="ECO:0000269" key="7">
    <source>
    </source>
</evidence>
<evidence type="ECO:0000269" key="8">
    <source>
    </source>
</evidence>
<evidence type="ECO:0000269" key="9">
    <source>
    </source>
</evidence>
<evidence type="ECO:0000269" key="10">
    <source>
    </source>
</evidence>
<evidence type="ECO:0000269" key="11">
    <source>
    </source>
</evidence>
<evidence type="ECO:0000269" key="12">
    <source>
    </source>
</evidence>
<evidence type="ECO:0000269" key="13">
    <source>
    </source>
</evidence>
<proteinExistence type="evidence at protein level"/>
<dbReference type="EMBL" id="D89049">
    <property type="protein sequence ID" value="BAA19005.1"/>
    <property type="molecule type" value="mRNA"/>
</dbReference>
<dbReference type="RefSeq" id="NP_776557.1">
    <property type="nucleotide sequence ID" value="NM_174132.2"/>
</dbReference>
<dbReference type="SMR" id="P79391"/>
<dbReference type="FunCoup" id="P79391">
    <property type="interactions" value="253"/>
</dbReference>
<dbReference type="STRING" id="9913.ENSBTAP00000005975"/>
<dbReference type="BindingDB" id="P79391"/>
<dbReference type="GlyCosmos" id="P79391">
    <property type="glycosylation" value="2 sites, No reported glycans"/>
</dbReference>
<dbReference type="GlyGen" id="P79391">
    <property type="glycosylation" value="2 sites"/>
</dbReference>
<dbReference type="PaxDb" id="9913-ENSBTAP00000005975"/>
<dbReference type="GeneID" id="281368"/>
<dbReference type="KEGG" id="bta:281368"/>
<dbReference type="CTD" id="4973"/>
<dbReference type="eggNOG" id="KOG4297">
    <property type="taxonomic scope" value="Eukaryota"/>
</dbReference>
<dbReference type="InParanoid" id="P79391"/>
<dbReference type="OrthoDB" id="6133475at2759"/>
<dbReference type="Proteomes" id="UP000009136">
    <property type="component" value="Unplaced"/>
</dbReference>
<dbReference type="GO" id="GO:0005576">
    <property type="term" value="C:extracellular region"/>
    <property type="evidence" value="ECO:0007669"/>
    <property type="project" value="UniProtKB-SubCell"/>
</dbReference>
<dbReference type="GO" id="GO:0045121">
    <property type="term" value="C:membrane raft"/>
    <property type="evidence" value="ECO:0007669"/>
    <property type="project" value="UniProtKB-SubCell"/>
</dbReference>
<dbReference type="GO" id="GO:0005886">
    <property type="term" value="C:plasma membrane"/>
    <property type="evidence" value="ECO:0000318"/>
    <property type="project" value="GO_Central"/>
</dbReference>
<dbReference type="GO" id="GO:0043235">
    <property type="term" value="C:receptor complex"/>
    <property type="evidence" value="ECO:0000318"/>
    <property type="project" value="GO_Central"/>
</dbReference>
<dbReference type="GO" id="GO:0030246">
    <property type="term" value="F:carbohydrate binding"/>
    <property type="evidence" value="ECO:0007669"/>
    <property type="project" value="UniProtKB-KW"/>
</dbReference>
<dbReference type="GO" id="GO:0005041">
    <property type="term" value="F:low-density lipoprotein particle receptor activity"/>
    <property type="evidence" value="ECO:0000318"/>
    <property type="project" value="GO_Central"/>
</dbReference>
<dbReference type="GO" id="GO:0002376">
    <property type="term" value="P:immune system process"/>
    <property type="evidence" value="ECO:0007669"/>
    <property type="project" value="UniProtKB-KW"/>
</dbReference>
<dbReference type="GO" id="GO:0006954">
    <property type="term" value="P:inflammatory response"/>
    <property type="evidence" value="ECO:0007669"/>
    <property type="project" value="UniProtKB-KW"/>
</dbReference>
<dbReference type="GO" id="GO:0007159">
    <property type="term" value="P:leukocyte cell-cell adhesion"/>
    <property type="evidence" value="ECO:0000318"/>
    <property type="project" value="GO_Central"/>
</dbReference>
<dbReference type="GO" id="GO:0042157">
    <property type="term" value="P:lipoprotein metabolic process"/>
    <property type="evidence" value="ECO:0000318"/>
    <property type="project" value="GO_Central"/>
</dbReference>
<dbReference type="CDD" id="cd03593">
    <property type="entry name" value="CLECT_NK_receptors_like"/>
    <property type="match status" value="1"/>
</dbReference>
<dbReference type="FunFam" id="3.10.100.10:FF:000079">
    <property type="entry name" value="Oxidized low-density lipoprotein receptor 1"/>
    <property type="match status" value="1"/>
</dbReference>
<dbReference type="Gene3D" id="3.10.100.10">
    <property type="entry name" value="Mannose-Binding Protein A, subunit A"/>
    <property type="match status" value="1"/>
</dbReference>
<dbReference type="InterPro" id="IPR001304">
    <property type="entry name" value="C-type_lectin-like"/>
</dbReference>
<dbReference type="InterPro" id="IPR016186">
    <property type="entry name" value="C-type_lectin-like/link_sf"/>
</dbReference>
<dbReference type="InterPro" id="IPR016187">
    <property type="entry name" value="CTDL_fold"/>
</dbReference>
<dbReference type="InterPro" id="IPR033992">
    <property type="entry name" value="NKR-like_CTLD"/>
</dbReference>
<dbReference type="InterPro" id="IPR052332">
    <property type="entry name" value="OxLDL_rcpt1-like"/>
</dbReference>
<dbReference type="PANTHER" id="PTHR47298">
    <property type="entry name" value="OXIDIZED LOW-DENSITY LIPOPROTEIN RECEPTOR 1"/>
    <property type="match status" value="1"/>
</dbReference>
<dbReference type="PANTHER" id="PTHR47298:SF1">
    <property type="entry name" value="OXIDIZED LOW-DENSITY LIPOPROTEIN RECEPTOR 1"/>
    <property type="match status" value="1"/>
</dbReference>
<dbReference type="Pfam" id="PF00059">
    <property type="entry name" value="Lectin_C"/>
    <property type="match status" value="1"/>
</dbReference>
<dbReference type="SMART" id="SM00034">
    <property type="entry name" value="CLECT"/>
    <property type="match status" value="1"/>
</dbReference>
<dbReference type="SUPFAM" id="SSF56436">
    <property type="entry name" value="C-type lectin-like"/>
    <property type="match status" value="1"/>
</dbReference>
<dbReference type="PROSITE" id="PS50041">
    <property type="entry name" value="C_TYPE_LECTIN_2"/>
    <property type="match status" value="1"/>
</dbReference>
<keyword id="KW-0130">Cell adhesion</keyword>
<keyword id="KW-1003">Cell membrane</keyword>
<keyword id="KW-0165">Cleavage on pair of basic residues</keyword>
<keyword id="KW-0175">Coiled coil</keyword>
<keyword id="KW-0903">Direct protein sequencing</keyword>
<keyword id="KW-1015">Disulfide bond</keyword>
<keyword id="KW-0325">Glycoprotein</keyword>
<keyword id="KW-0391">Immunity</keyword>
<keyword id="KW-0395">Inflammatory response</keyword>
<keyword id="KW-0430">Lectin</keyword>
<keyword id="KW-0449">Lipoprotein</keyword>
<keyword id="KW-0472">Membrane</keyword>
<keyword id="KW-0564">Palmitate</keyword>
<keyword id="KW-0675">Receptor</keyword>
<keyword id="KW-1185">Reference proteome</keyword>
<keyword id="KW-0964">Secreted</keyword>
<keyword id="KW-0735">Signal-anchor</keyword>
<keyword id="KW-0812">Transmembrane</keyword>
<keyword id="KW-1133">Transmembrane helix</keyword>
<reference key="1">
    <citation type="journal article" date="1997" name="Nature">
        <title>An endothelial receptor for oxidized low-density lipoprotein.</title>
        <authorList>
            <person name="Sawamura T."/>
            <person name="Kume N."/>
            <person name="Aoyama T."/>
            <person name="Moriwaki H."/>
            <person name="Hoshikawa H."/>
            <person name="Aiba Y."/>
            <person name="Tanaka T."/>
            <person name="Miwa S."/>
            <person name="Katsura Y."/>
            <person name="Kita T."/>
            <person name="Masaki T."/>
        </authorList>
    </citation>
    <scope>NUCLEOTIDE SEQUENCE [MRNA]</scope>
    <scope>FUNCTION</scope>
    <scope>SUBCELLULAR LOCATION</scope>
    <scope>TISSUE SPECIFICITY</scope>
    <source>
        <tissue>Lung</tissue>
    </source>
</reference>
<reference key="2">
    <citation type="journal article" date="2000" name="Arterioscler. Thromb. Vasc. Biol.">
        <title>Identification of soluble forms of lectin-like oxidized LDL receptor-1.</title>
        <authorList>
            <person name="Murase T."/>
            <person name="Kume N."/>
            <person name="Kataoka H."/>
            <person name="Minami M."/>
            <person name="Sawamura T."/>
            <person name="Masaki T."/>
            <person name="Kita T."/>
        </authorList>
    </citation>
    <scope>PROTEIN SEQUENCE OF 87-91 AND 90-94</scope>
    <scope>IDENTIFICATION OF SOLUBLE FORMS</scope>
</reference>
<reference key="3">
    <citation type="journal article" date="1998" name="Proc. Natl. Acad. Sci. U.S.A.">
        <title>Lectin-like oxidized low-density lipoprotein receptor 1 mediates phagocytosis of aged/apoptotic cells in endothelial cells.</title>
        <authorList>
            <person name="Oka K."/>
            <person name="Sawamura T."/>
            <person name="Kikuta K."/>
            <person name="Itokawa S."/>
            <person name="Kume N."/>
            <person name="Kita T."/>
            <person name="Masaki T."/>
        </authorList>
    </citation>
    <scope>FUNCTION</scope>
</reference>
<reference key="4">
    <citation type="journal article" date="2000" name="Proc. Natl. Acad. Sci. U.S.A.">
        <title>A platelet-endothelium interaction mediated by lectin-like oxidized low-density lipoprotein receptor-1.</title>
        <authorList>
            <person name="Kakutani M."/>
            <person name="Masaki T."/>
            <person name="Sawamura T."/>
        </authorList>
    </citation>
    <scope>FUNCTION</scope>
</reference>
<reference key="5">
    <citation type="journal article" date="2001" name="Biochem. J.">
        <title>Conserved C-terminal residues within the lectin-like domain of LOX-1 are essential for oxidized low-density-lipoprotein binding.</title>
        <authorList>
            <person name="Chen M."/>
            <person name="Narumiya S."/>
            <person name="Masaki T."/>
            <person name="Sawamura T."/>
        </authorList>
    </citation>
    <scope>MUTAGENESIS OF LYS-262; LYS-263 AND ASN-265</scope>
</reference>
<reference key="6">
    <citation type="journal article" date="2000" name="J. Biol. Chem.">
        <title>Biosynthesis and post-translational processing of lectin-like oxidized low density lipoprotein receptor-1 (LOX-1). N-linked glycosylation affects cell-surface expression and ligand binding.</title>
        <authorList>
            <person name="Kataoka H."/>
            <person name="Kume N."/>
            <person name="Miyamoto S."/>
            <person name="Minami M."/>
            <person name="Murase T."/>
            <person name="Sawamura T."/>
            <person name="Masaki T."/>
            <person name="Hashimoto N."/>
            <person name="Kita T."/>
        </authorList>
    </citation>
    <scope>GLYCOSYLATION</scope>
</reference>
<reference key="7">
    <citation type="journal article" date="2000" name="J. Biol. Chem.">
        <title>Oxidized low density lipoprotein (ox-LDL) binding to ox-LDL receptor-1 in endothelial cells induces the activation of NF-kappaB through an increased production of intracellular reactive oxygen species.</title>
        <authorList>
            <person name="Cominacini L."/>
            <person name="Pasini A.F."/>
            <person name="Garbin U."/>
            <person name="Davoli A."/>
            <person name="Tosetti M.L."/>
            <person name="Campagnola M."/>
            <person name="Rigoni A."/>
            <person name="Pastorino A.M."/>
            <person name="Lo Cascio V."/>
            <person name="Sawamura T."/>
        </authorList>
    </citation>
    <scope>FUNCTION</scope>
</reference>
<reference key="8">
    <citation type="journal article" date="2001" name="J. Immunol.">
        <title>LOX-1 supports adhesion of Gram-positive and Gram-negative bacteria.</title>
        <authorList>
            <person name="Shimaoka T."/>
            <person name="Kume N."/>
            <person name="Minami M."/>
            <person name="Hayashida K."/>
            <person name="Sawamura T."/>
            <person name="Kita T."/>
            <person name="Yonehara S."/>
        </authorList>
    </citation>
    <scope>FUNCTION</scope>
</reference>
<reference key="9">
    <citation type="journal article" date="2001" name="FEBS Lett.">
        <title>Requirements of basic amino acid residues within the lectin-like domain of LOX-1 for the binding of oxidized low-density lipoprotein.</title>
        <authorList>
            <person name="Chen M."/>
            <person name="Inoue K."/>
            <person name="Narumiya S."/>
            <person name="Masaki T."/>
            <person name="Sawamura T."/>
        </authorList>
    </citation>
    <scope>MUTAGENESIS OF 205-ARG-LYS-206; ARG-225; ARG-232 AND ARG-244</scope>
</reference>
<reference key="10">
    <citation type="journal article" date="2002" name="FEBS Lett.">
        <title>Lectin-like oxidized low density lipoprotein receptor-1 (LOX-1) serves as an endothelial receptor for advanced glycation end products (AGE).</title>
        <authorList>
            <person name="Jono T."/>
            <person name="Miyazaki A."/>
            <person name="Nagai R."/>
            <person name="Sawamura T."/>
            <person name="Kitamura T."/>
            <person name="Horiuchi S."/>
        </authorList>
    </citation>
    <scope>FUNCTION</scope>
</reference>
<name>OLR1_BOVIN</name>
<sequence>MTVDDPKGMKDQLDQKPNGKTAKGFVSSWRWYPAAVTLGVLCLGLLVTVILLILQLSQVSDLIKKQQANITHQEDILEGQILAQRRSEKSAQESQKELKEMIETLAHKLDEKSKKLMELHRQNLNLQEVLKEAANYSGPCPQDWLWHEENCYQFSSGSFNWEKSQENCLSLDAHLLKINSTDELEFIQQMIAHSSFPFWMGLSMRKPNYSWLWEDGTPLTPHLFRIQGAVSRMYPSGTCAYIQRGTVFAENCILTAFSICQKKANLLRAQ</sequence>
<comment type="function">
    <text evidence="5 7 9 11 12 13">Receptor that mediates the recognition, internalization and degradation of oxidatively modified low density lipoprotein (oxLDL) by vascular endothelial cells. OxLDL is a marker of atherosclerosis that induces vascular endothelial cell activation and dysfunction, resulting in pro-inflammatory responses, pro-oxidative conditions and apoptosis. Its association with oxLDL induces the activation of NF-kappa-B through an increased production of intracellular reactive oxygen and a variety of pro-atherogenic cellular responses including a reduction of nitric oxide (NO) release, monocyte adhesion and apoptosis. In addition to binding oxLDL, it acts as a receptor for the HSP70 protein involved in antigen cross-presentation to naive T-cells in dendritic cells, thereby participating in cell-mediated antigen cross-presentation. Also involved in inflammatory process, by acting as a leukocyte-adhesion molecule at the vascular interface in endotoxin-induced inflammation. Also acts as a receptor for advanced glycation end (AGE) products, activated platelets, monocytes, apoptotic cells and both Gram-negative and Gram-positive bacteria.</text>
</comment>
<comment type="subunit">
    <text evidence="1">Homodimer; disulfide-linked. May form a hexamer composed of 3 homodimers. Interacts with HSP70 (By similarity).</text>
</comment>
<comment type="subcellular location">
    <subcellularLocation>
        <location evidence="1">Cell membrane</location>
        <topology evidence="1">Lipid-anchor</topology>
    </subcellularLocation>
    <subcellularLocation>
        <location evidence="12">Cell membrane</location>
        <topology evidence="12">Single-pass type II membrane protein</topology>
    </subcellularLocation>
    <subcellularLocation>
        <location evidence="1">Membrane raft</location>
    </subcellularLocation>
    <subcellularLocation>
        <location evidence="12">Secreted</location>
    </subcellularLocation>
    <text evidence="1">Localization to membrane rafts requires palmitoylation (By similarity). A secreted form also exists.</text>
</comment>
<comment type="tissue specificity">
    <text evidence="12">Highly expressed in endothelial cells, aortic intima and lung. Expressed at low level in other tissues.</text>
</comment>
<comment type="domain">
    <text evidence="1">The cytoplasmic region is required for subcellular sorting on the cell surface.</text>
</comment>
<comment type="domain">
    <text>The C-type lectin domain mediates the recognition and binding of oxLDL.</text>
</comment>
<comment type="PTM">
    <text evidence="6">N-glycosylated.</text>
</comment>
<accession>P79391</accession>
<feature type="chain" id="PRO_0000017440" description="Oxidized low-density lipoprotein receptor 1">
    <location>
        <begin position="1"/>
        <end position="270"/>
    </location>
</feature>
<feature type="chain" id="PRO_0000017441" description="Oxidized low-density lipoprotein receptor 1, soluble form A">
    <location>
        <begin position="87"/>
        <end position="270"/>
    </location>
</feature>
<feature type="chain" id="PRO_0000017442" description="Oxidized low-density lipoprotein receptor 1, soluble form B">
    <location>
        <begin position="90"/>
        <end position="270"/>
    </location>
</feature>
<feature type="topological domain" description="Cytoplasmic" evidence="2">
    <location>
        <begin position="1"/>
        <end position="33"/>
    </location>
</feature>
<feature type="transmembrane region" description="Helical; Signal-anchor for type II membrane protein" evidence="2">
    <location>
        <begin position="34"/>
        <end position="56"/>
    </location>
</feature>
<feature type="topological domain" description="Extracellular" evidence="2">
    <location>
        <begin position="57"/>
        <end position="270"/>
    </location>
</feature>
<feature type="domain" description="C-type lectin" evidence="3">
    <location>
        <begin position="147"/>
        <end position="261"/>
    </location>
</feature>
<feature type="region of interest" description="Disordered" evidence="4">
    <location>
        <begin position="1"/>
        <end position="22"/>
    </location>
</feature>
<feature type="region of interest" description="Neck">
    <location>
        <begin position="57"/>
        <end position="146"/>
    </location>
</feature>
<feature type="coiled-coil region" evidence="2">
    <location>
        <begin position="85"/>
        <end position="135"/>
    </location>
</feature>
<feature type="compositionally biased region" description="Basic and acidic residues" evidence="4">
    <location>
        <begin position="1"/>
        <end position="14"/>
    </location>
</feature>
<feature type="lipid moiety-binding region" description="S-palmitoyl cysteine" evidence="1">
    <location>
        <position position="42"/>
    </location>
</feature>
<feature type="glycosylation site" description="N-linked (GlcNAc...) asparagine" evidence="2">
    <location>
        <position position="69"/>
    </location>
</feature>
<feature type="glycosylation site" description="N-linked (GlcNAc...) asparagine" evidence="2">
    <location>
        <position position="135"/>
    </location>
</feature>
<feature type="disulfide bond" evidence="3">
    <location>
        <begin position="140"/>
        <end position="151"/>
    </location>
</feature>
<feature type="disulfide bond" evidence="3">
    <location>
        <begin position="168"/>
        <end position="260"/>
    </location>
</feature>
<feature type="disulfide bond" evidence="3">
    <location>
        <begin position="239"/>
        <end position="252"/>
    </location>
</feature>
<feature type="mutagenesis site" description="Does not affect oxLDL binding. Impairs oxLDL binding; when associated with A-225; A-232 and A-234." evidence="10">
    <original>RK</original>
    <variation>AA</variation>
    <location>
        <begin position="205"/>
        <end position="206"/>
    </location>
</feature>
<feature type="mutagenesis site" description="Reduces oxLDL binding. Impairs oxLDL binding; when associated with A-205; A-206; A-225; A-232 and A-234." evidence="10">
    <original>R</original>
    <variation>A</variation>
    <location>
        <position position="225"/>
    </location>
</feature>
<feature type="mutagenesis site" description="Does not affect oxLDL binding. Impairs oxLDL binding; when associated with A-205; A-206; A-225 and A-234." evidence="10">
    <original>R</original>
    <variation>A</variation>
    <location>
        <position position="232"/>
    </location>
</feature>
<feature type="mutagenesis site" description="Does not affect oxLDL binding. Impairs oxLDL binding; when associated with A-205; A-206; A-225 and A-232." evidence="10">
    <original>R</original>
    <variation>A</variation>
    <location>
        <position position="244"/>
    </location>
</feature>
<feature type="mutagenesis site" description="Impairs the binding to oxLDL." evidence="8">
    <original>K</original>
    <variation>A</variation>
    <location>
        <position position="262"/>
    </location>
</feature>
<feature type="mutagenesis site" description="Impairs the binding to oxLDL." evidence="8">
    <original>K</original>
    <variation>A</variation>
    <location>
        <position position="263"/>
    </location>
</feature>
<feature type="mutagenesis site" description="Impairs the binding to oxLDL." evidence="8">
    <original>N</original>
    <variation>D</variation>
    <location>
        <position position="265"/>
    </location>
</feature>
<gene>
    <name type="primary">OLR1</name>
    <name type="synonym">LOX1</name>
</gene>
<protein>
    <recommendedName>
        <fullName>Oxidized low-density lipoprotein receptor 1</fullName>
        <shortName>Ox-LDL receptor 1</shortName>
    </recommendedName>
    <alternativeName>
        <fullName>Lectin-like oxidized LDL receptor 1</fullName>
        <shortName>LOX-1</shortName>
        <shortName>Lectin-like oxLDL receptor 1</shortName>
        <shortName>bLOX-1</shortName>
    </alternativeName>
    <alternativeName>
        <fullName>Lectin-type oxidized LDL receptor 1</fullName>
    </alternativeName>
    <component>
        <recommendedName>
            <fullName>Oxidized low-density lipoprotein receptor 1, soluble form A</fullName>
        </recommendedName>
    </component>
    <component>
        <recommendedName>
            <fullName>Oxidized low-density lipoprotein receptor 1, soluble form B</fullName>
        </recommendedName>
    </component>
</protein>
<organism>
    <name type="scientific">Bos taurus</name>
    <name type="common">Bovine</name>
    <dbReference type="NCBI Taxonomy" id="9913"/>
    <lineage>
        <taxon>Eukaryota</taxon>
        <taxon>Metazoa</taxon>
        <taxon>Chordata</taxon>
        <taxon>Craniata</taxon>
        <taxon>Vertebrata</taxon>
        <taxon>Euteleostomi</taxon>
        <taxon>Mammalia</taxon>
        <taxon>Eutheria</taxon>
        <taxon>Laurasiatheria</taxon>
        <taxon>Artiodactyla</taxon>
        <taxon>Ruminantia</taxon>
        <taxon>Pecora</taxon>
        <taxon>Bovidae</taxon>
        <taxon>Bovinae</taxon>
        <taxon>Bos</taxon>
    </lineage>
</organism>